<reference key="1">
    <citation type="submission" date="2009-02" db="EMBL/GenBank/DDBJ databases">
        <title>Vibrio splendidus str. LGP32 complete genome.</title>
        <authorList>
            <person name="Mazel D."/>
            <person name="Le Roux F."/>
        </authorList>
    </citation>
    <scope>NUCLEOTIDE SEQUENCE [LARGE SCALE GENOMIC DNA]</scope>
    <source>
        <strain>LGP32</strain>
    </source>
</reference>
<dbReference type="EMBL" id="FM954972">
    <property type="protein sequence ID" value="CAV19638.1"/>
    <property type="molecule type" value="Genomic_DNA"/>
</dbReference>
<dbReference type="SMR" id="B7VJH4"/>
<dbReference type="STRING" id="575788.VS_2479"/>
<dbReference type="KEGG" id="vsp:VS_2479"/>
<dbReference type="eggNOG" id="COG0184">
    <property type="taxonomic scope" value="Bacteria"/>
</dbReference>
<dbReference type="HOGENOM" id="CLU_148518_0_0_6"/>
<dbReference type="Proteomes" id="UP000009100">
    <property type="component" value="Chromosome 1"/>
</dbReference>
<dbReference type="GO" id="GO:0022627">
    <property type="term" value="C:cytosolic small ribosomal subunit"/>
    <property type="evidence" value="ECO:0007669"/>
    <property type="project" value="TreeGrafter"/>
</dbReference>
<dbReference type="GO" id="GO:0019843">
    <property type="term" value="F:rRNA binding"/>
    <property type="evidence" value="ECO:0007669"/>
    <property type="project" value="UniProtKB-UniRule"/>
</dbReference>
<dbReference type="GO" id="GO:0003735">
    <property type="term" value="F:structural constituent of ribosome"/>
    <property type="evidence" value="ECO:0007669"/>
    <property type="project" value="InterPro"/>
</dbReference>
<dbReference type="GO" id="GO:0006412">
    <property type="term" value="P:translation"/>
    <property type="evidence" value="ECO:0007669"/>
    <property type="project" value="UniProtKB-UniRule"/>
</dbReference>
<dbReference type="CDD" id="cd00353">
    <property type="entry name" value="Ribosomal_S15p_S13e"/>
    <property type="match status" value="1"/>
</dbReference>
<dbReference type="FunFam" id="1.10.287.10:FF:000002">
    <property type="entry name" value="30S ribosomal protein S15"/>
    <property type="match status" value="1"/>
</dbReference>
<dbReference type="Gene3D" id="6.10.250.3130">
    <property type="match status" value="1"/>
</dbReference>
<dbReference type="Gene3D" id="1.10.287.10">
    <property type="entry name" value="S15/NS1, RNA-binding"/>
    <property type="match status" value="1"/>
</dbReference>
<dbReference type="HAMAP" id="MF_01343_B">
    <property type="entry name" value="Ribosomal_uS15_B"/>
    <property type="match status" value="1"/>
</dbReference>
<dbReference type="InterPro" id="IPR000589">
    <property type="entry name" value="Ribosomal_uS15"/>
</dbReference>
<dbReference type="InterPro" id="IPR005290">
    <property type="entry name" value="Ribosomal_uS15_bac-type"/>
</dbReference>
<dbReference type="InterPro" id="IPR009068">
    <property type="entry name" value="uS15_NS1_RNA-bd_sf"/>
</dbReference>
<dbReference type="NCBIfam" id="TIGR00952">
    <property type="entry name" value="S15_bact"/>
    <property type="match status" value="1"/>
</dbReference>
<dbReference type="PANTHER" id="PTHR23321">
    <property type="entry name" value="RIBOSOMAL PROTEIN S15, BACTERIAL AND ORGANELLAR"/>
    <property type="match status" value="1"/>
</dbReference>
<dbReference type="PANTHER" id="PTHR23321:SF26">
    <property type="entry name" value="SMALL RIBOSOMAL SUBUNIT PROTEIN US15M"/>
    <property type="match status" value="1"/>
</dbReference>
<dbReference type="Pfam" id="PF00312">
    <property type="entry name" value="Ribosomal_S15"/>
    <property type="match status" value="1"/>
</dbReference>
<dbReference type="SMART" id="SM01387">
    <property type="entry name" value="Ribosomal_S15"/>
    <property type="match status" value="1"/>
</dbReference>
<dbReference type="SUPFAM" id="SSF47060">
    <property type="entry name" value="S15/NS1 RNA-binding domain"/>
    <property type="match status" value="1"/>
</dbReference>
<dbReference type="PROSITE" id="PS00362">
    <property type="entry name" value="RIBOSOMAL_S15"/>
    <property type="match status" value="1"/>
</dbReference>
<keyword id="KW-0687">Ribonucleoprotein</keyword>
<keyword id="KW-0689">Ribosomal protein</keyword>
<keyword id="KW-0694">RNA-binding</keyword>
<keyword id="KW-0699">rRNA-binding</keyword>
<organism>
    <name type="scientific">Vibrio atlanticus (strain LGP32)</name>
    <name type="common">Vibrio splendidus (strain Mel32)</name>
    <dbReference type="NCBI Taxonomy" id="575788"/>
    <lineage>
        <taxon>Bacteria</taxon>
        <taxon>Pseudomonadati</taxon>
        <taxon>Pseudomonadota</taxon>
        <taxon>Gammaproteobacteria</taxon>
        <taxon>Vibrionales</taxon>
        <taxon>Vibrionaceae</taxon>
        <taxon>Vibrio</taxon>
    </lineage>
</organism>
<name>RS15_VIBA3</name>
<protein>
    <recommendedName>
        <fullName evidence="1">Small ribosomal subunit protein uS15</fullName>
    </recommendedName>
    <alternativeName>
        <fullName evidence="2">30S ribosomal protein S15</fullName>
    </alternativeName>
</protein>
<proteinExistence type="inferred from homology"/>
<comment type="function">
    <text evidence="1">One of the primary rRNA binding proteins, it binds directly to 16S rRNA where it helps nucleate assembly of the platform of the 30S subunit by binding and bridging several RNA helices of the 16S rRNA.</text>
</comment>
<comment type="function">
    <text evidence="1">Forms an intersubunit bridge (bridge B4) with the 23S rRNA of the 50S subunit in the ribosome.</text>
</comment>
<comment type="subunit">
    <text evidence="1">Part of the 30S ribosomal subunit. Forms a bridge to the 50S subunit in the 70S ribosome, contacting the 23S rRNA.</text>
</comment>
<comment type="similarity">
    <text evidence="1">Belongs to the universal ribosomal protein uS15 family.</text>
</comment>
<sequence length="89" mass="10104">MSLNAETKAAIVAEYAQSEGDTGSPEVQVALLTASINHLQGHFKAHKHDHHSRRGLLRMVSSRRKLLDYLKGKNLTRYQDLIKRLGLRR</sequence>
<accession>B7VJH4</accession>
<evidence type="ECO:0000255" key="1">
    <source>
        <dbReference type="HAMAP-Rule" id="MF_01343"/>
    </source>
</evidence>
<evidence type="ECO:0000305" key="2"/>
<feature type="chain" id="PRO_1000166448" description="Small ribosomal subunit protein uS15">
    <location>
        <begin position="1"/>
        <end position="89"/>
    </location>
</feature>
<gene>
    <name evidence="1" type="primary">rpsO</name>
    <name type="ordered locus">VS_2479</name>
</gene>